<name>LEXA_THEM4</name>
<accession>A6LM87</accession>
<reference key="1">
    <citation type="submission" date="2007-05" db="EMBL/GenBank/DDBJ databases">
        <title>Complete sequence of Thermosipho melanesiensis BI429.</title>
        <authorList>
            <consortium name="US DOE Joint Genome Institute"/>
            <person name="Copeland A."/>
            <person name="Lucas S."/>
            <person name="Lapidus A."/>
            <person name="Barry K."/>
            <person name="Glavina del Rio T."/>
            <person name="Dalin E."/>
            <person name="Tice H."/>
            <person name="Pitluck S."/>
            <person name="Chertkov O."/>
            <person name="Brettin T."/>
            <person name="Bruce D."/>
            <person name="Detter J.C."/>
            <person name="Han C."/>
            <person name="Schmutz J."/>
            <person name="Larimer F."/>
            <person name="Land M."/>
            <person name="Hauser L."/>
            <person name="Kyrpides N."/>
            <person name="Mikhailova N."/>
            <person name="Nelson K."/>
            <person name="Gogarten J.P."/>
            <person name="Noll K."/>
            <person name="Richardson P."/>
        </authorList>
    </citation>
    <scope>NUCLEOTIDE SEQUENCE [LARGE SCALE GENOMIC DNA]</scope>
    <source>
        <strain>DSM 12029 / CIP 104789 / BI429</strain>
    </source>
</reference>
<protein>
    <recommendedName>
        <fullName evidence="1">LexA repressor</fullName>
        <ecNumber evidence="1">3.4.21.88</ecNumber>
    </recommendedName>
</protein>
<sequence>MKKLTEKQQKVLDFIKNYIQQNGYSPSIRDIAKHFKLTPRGAHIHVIALEKKGYITRNPKNSRSISLVKRQESILIPVKGKISAGMGIEMFEIVDEEIEIPVRMISGFGNYFALKVEGNSMIDAHIINGDYVILKKQYRIPNGQIAAVVFDNKVTLKRFYHKKDKVELVPENKDMNPIVCDAKDIKVIGKLVGIIRFYE</sequence>
<feature type="chain" id="PRO_1000001351" description="LexA repressor">
    <location>
        <begin position="1"/>
        <end position="199"/>
    </location>
</feature>
<feature type="DNA-binding region" description="H-T-H motif" evidence="1">
    <location>
        <begin position="28"/>
        <end position="47"/>
    </location>
</feature>
<feature type="active site" description="For autocatalytic cleavage activity" evidence="1">
    <location>
        <position position="120"/>
    </location>
</feature>
<feature type="active site" description="For autocatalytic cleavage activity" evidence="1">
    <location>
        <position position="157"/>
    </location>
</feature>
<feature type="site" description="Cleavage; by autolysis" evidence="1">
    <location>
        <begin position="84"/>
        <end position="85"/>
    </location>
</feature>
<gene>
    <name evidence="1" type="primary">lexA</name>
    <name type="ordered locus">Tmel_1184</name>
</gene>
<proteinExistence type="inferred from homology"/>
<evidence type="ECO:0000255" key="1">
    <source>
        <dbReference type="HAMAP-Rule" id="MF_00015"/>
    </source>
</evidence>
<keyword id="KW-0068">Autocatalytic cleavage</keyword>
<keyword id="KW-0227">DNA damage</keyword>
<keyword id="KW-0234">DNA repair</keyword>
<keyword id="KW-0235">DNA replication</keyword>
<keyword id="KW-0238">DNA-binding</keyword>
<keyword id="KW-0378">Hydrolase</keyword>
<keyword id="KW-0678">Repressor</keyword>
<keyword id="KW-0742">SOS response</keyword>
<keyword id="KW-0804">Transcription</keyword>
<keyword id="KW-0805">Transcription regulation</keyword>
<comment type="function">
    <text evidence="1">Represses a number of genes involved in the response to DNA damage (SOS response), including recA and lexA. In the presence of single-stranded DNA, RecA interacts with LexA causing an autocatalytic cleavage which disrupts the DNA-binding part of LexA, leading to derepression of the SOS regulon and eventually DNA repair.</text>
</comment>
<comment type="catalytic activity">
    <reaction evidence="1">
        <text>Hydrolysis of Ala-|-Gly bond in repressor LexA.</text>
        <dbReference type="EC" id="3.4.21.88"/>
    </reaction>
</comment>
<comment type="subunit">
    <text evidence="1">Homodimer.</text>
</comment>
<comment type="similarity">
    <text evidence="1">Belongs to the peptidase S24 family.</text>
</comment>
<organism>
    <name type="scientific">Thermosipho melanesiensis (strain DSM 12029 / CIP 104789 / BI429)</name>
    <dbReference type="NCBI Taxonomy" id="391009"/>
    <lineage>
        <taxon>Bacteria</taxon>
        <taxon>Thermotogati</taxon>
        <taxon>Thermotogota</taxon>
        <taxon>Thermotogae</taxon>
        <taxon>Thermotogales</taxon>
        <taxon>Fervidobacteriaceae</taxon>
        <taxon>Thermosipho</taxon>
    </lineage>
</organism>
<dbReference type="EC" id="3.4.21.88" evidence="1"/>
<dbReference type="EMBL" id="CP000716">
    <property type="protein sequence ID" value="ABR31038.1"/>
    <property type="molecule type" value="Genomic_DNA"/>
</dbReference>
<dbReference type="RefSeq" id="WP_012057397.1">
    <property type="nucleotide sequence ID" value="NC_009616.1"/>
</dbReference>
<dbReference type="SMR" id="A6LM87"/>
<dbReference type="STRING" id="391009.Tmel_1184"/>
<dbReference type="MEROPS" id="S24.001"/>
<dbReference type="KEGG" id="tme:Tmel_1184"/>
<dbReference type="eggNOG" id="COG1974">
    <property type="taxonomic scope" value="Bacteria"/>
</dbReference>
<dbReference type="HOGENOM" id="CLU_066192_45_1_0"/>
<dbReference type="OrthoDB" id="9802364at2"/>
<dbReference type="Proteomes" id="UP000001110">
    <property type="component" value="Chromosome"/>
</dbReference>
<dbReference type="GO" id="GO:0003677">
    <property type="term" value="F:DNA binding"/>
    <property type="evidence" value="ECO:0007669"/>
    <property type="project" value="UniProtKB-UniRule"/>
</dbReference>
<dbReference type="GO" id="GO:0004252">
    <property type="term" value="F:serine-type endopeptidase activity"/>
    <property type="evidence" value="ECO:0007669"/>
    <property type="project" value="UniProtKB-UniRule"/>
</dbReference>
<dbReference type="GO" id="GO:0006281">
    <property type="term" value="P:DNA repair"/>
    <property type="evidence" value="ECO:0007669"/>
    <property type="project" value="UniProtKB-UniRule"/>
</dbReference>
<dbReference type="GO" id="GO:0006260">
    <property type="term" value="P:DNA replication"/>
    <property type="evidence" value="ECO:0007669"/>
    <property type="project" value="UniProtKB-UniRule"/>
</dbReference>
<dbReference type="GO" id="GO:0045892">
    <property type="term" value="P:negative regulation of DNA-templated transcription"/>
    <property type="evidence" value="ECO:0007669"/>
    <property type="project" value="UniProtKB-UniRule"/>
</dbReference>
<dbReference type="GO" id="GO:0006508">
    <property type="term" value="P:proteolysis"/>
    <property type="evidence" value="ECO:0007669"/>
    <property type="project" value="InterPro"/>
</dbReference>
<dbReference type="GO" id="GO:0009432">
    <property type="term" value="P:SOS response"/>
    <property type="evidence" value="ECO:0007669"/>
    <property type="project" value="UniProtKB-UniRule"/>
</dbReference>
<dbReference type="CDD" id="cd06529">
    <property type="entry name" value="S24_LexA-like"/>
    <property type="match status" value="1"/>
</dbReference>
<dbReference type="FunFam" id="1.10.10.10:FF:000009">
    <property type="entry name" value="LexA repressor"/>
    <property type="match status" value="1"/>
</dbReference>
<dbReference type="Gene3D" id="2.10.109.10">
    <property type="entry name" value="Umud Fragment, subunit A"/>
    <property type="match status" value="1"/>
</dbReference>
<dbReference type="Gene3D" id="1.10.10.10">
    <property type="entry name" value="Winged helix-like DNA-binding domain superfamily/Winged helix DNA-binding domain"/>
    <property type="match status" value="1"/>
</dbReference>
<dbReference type="HAMAP" id="MF_00015">
    <property type="entry name" value="LexA"/>
    <property type="match status" value="1"/>
</dbReference>
<dbReference type="InterPro" id="IPR006200">
    <property type="entry name" value="LexA"/>
</dbReference>
<dbReference type="InterPro" id="IPR039418">
    <property type="entry name" value="LexA-like"/>
</dbReference>
<dbReference type="InterPro" id="IPR036286">
    <property type="entry name" value="LexA/Signal_pep-like_sf"/>
</dbReference>
<dbReference type="InterPro" id="IPR006199">
    <property type="entry name" value="LexA_DNA-bd_dom"/>
</dbReference>
<dbReference type="InterPro" id="IPR050077">
    <property type="entry name" value="LexA_repressor"/>
</dbReference>
<dbReference type="InterPro" id="IPR006197">
    <property type="entry name" value="Peptidase_S24_LexA"/>
</dbReference>
<dbReference type="InterPro" id="IPR015927">
    <property type="entry name" value="Peptidase_S24_S26A/B/C"/>
</dbReference>
<dbReference type="InterPro" id="IPR036388">
    <property type="entry name" value="WH-like_DNA-bd_sf"/>
</dbReference>
<dbReference type="InterPro" id="IPR036390">
    <property type="entry name" value="WH_DNA-bd_sf"/>
</dbReference>
<dbReference type="NCBIfam" id="TIGR00498">
    <property type="entry name" value="lexA"/>
    <property type="match status" value="1"/>
</dbReference>
<dbReference type="PANTHER" id="PTHR33516">
    <property type="entry name" value="LEXA REPRESSOR"/>
    <property type="match status" value="1"/>
</dbReference>
<dbReference type="PANTHER" id="PTHR33516:SF2">
    <property type="entry name" value="LEXA REPRESSOR-RELATED"/>
    <property type="match status" value="1"/>
</dbReference>
<dbReference type="Pfam" id="PF01726">
    <property type="entry name" value="LexA_DNA_bind"/>
    <property type="match status" value="1"/>
</dbReference>
<dbReference type="Pfam" id="PF00717">
    <property type="entry name" value="Peptidase_S24"/>
    <property type="match status" value="1"/>
</dbReference>
<dbReference type="PRINTS" id="PR00726">
    <property type="entry name" value="LEXASERPTASE"/>
</dbReference>
<dbReference type="SUPFAM" id="SSF51306">
    <property type="entry name" value="LexA/Signal peptidase"/>
    <property type="match status" value="1"/>
</dbReference>
<dbReference type="SUPFAM" id="SSF46785">
    <property type="entry name" value="Winged helix' DNA-binding domain"/>
    <property type="match status" value="1"/>
</dbReference>